<protein>
    <recommendedName>
        <fullName evidence="1">Na(+)/H(+) antiporter NhaA 1</fullName>
    </recommendedName>
    <alternativeName>
        <fullName evidence="1">Sodium/proton antiporter NhaA 1</fullName>
    </alternativeName>
</protein>
<evidence type="ECO:0000255" key="1">
    <source>
        <dbReference type="HAMAP-Rule" id="MF_01844"/>
    </source>
</evidence>
<accession>Q5HSD9</accession>
<comment type="function">
    <text evidence="1">Na(+)/H(+) antiporter that extrudes sodium in exchange for external protons.</text>
</comment>
<comment type="catalytic activity">
    <reaction evidence="1">
        <text>Na(+)(in) + 2 H(+)(out) = Na(+)(out) + 2 H(+)(in)</text>
        <dbReference type="Rhea" id="RHEA:29251"/>
        <dbReference type="ChEBI" id="CHEBI:15378"/>
        <dbReference type="ChEBI" id="CHEBI:29101"/>
    </reaction>
    <physiologicalReaction direction="left-to-right" evidence="1">
        <dbReference type="Rhea" id="RHEA:29252"/>
    </physiologicalReaction>
</comment>
<comment type="subcellular location">
    <subcellularLocation>
        <location evidence="1">Cell inner membrane</location>
        <topology evidence="1">Multi-pass membrane protein</topology>
    </subcellularLocation>
</comment>
<comment type="similarity">
    <text evidence="1">Belongs to the NhaA Na(+)/H(+) (TC 2.A.33) antiporter family.</text>
</comment>
<dbReference type="EMBL" id="CP000025">
    <property type="protein sequence ID" value="AAW36248.1"/>
    <property type="molecule type" value="Genomic_DNA"/>
</dbReference>
<dbReference type="SMR" id="Q5HSD9"/>
<dbReference type="KEGG" id="cjr:CJE1826"/>
<dbReference type="HOGENOM" id="CLU_015803_1_0_7"/>
<dbReference type="GO" id="GO:0005886">
    <property type="term" value="C:plasma membrane"/>
    <property type="evidence" value="ECO:0007669"/>
    <property type="project" value="UniProtKB-SubCell"/>
</dbReference>
<dbReference type="GO" id="GO:0015385">
    <property type="term" value="F:sodium:proton antiporter activity"/>
    <property type="evidence" value="ECO:0007669"/>
    <property type="project" value="TreeGrafter"/>
</dbReference>
<dbReference type="GO" id="GO:0006885">
    <property type="term" value="P:regulation of pH"/>
    <property type="evidence" value="ECO:0007669"/>
    <property type="project" value="InterPro"/>
</dbReference>
<dbReference type="Gene3D" id="1.20.1530.10">
    <property type="entry name" value="Na+/H+ antiporter like domain"/>
    <property type="match status" value="1"/>
</dbReference>
<dbReference type="HAMAP" id="MF_01844">
    <property type="entry name" value="NhaA"/>
    <property type="match status" value="1"/>
</dbReference>
<dbReference type="InterPro" id="IPR023171">
    <property type="entry name" value="Na/H_antiporter_dom_sf"/>
</dbReference>
<dbReference type="InterPro" id="IPR004670">
    <property type="entry name" value="NhaA"/>
</dbReference>
<dbReference type="NCBIfam" id="TIGR00773">
    <property type="entry name" value="NhaA"/>
    <property type="match status" value="1"/>
</dbReference>
<dbReference type="NCBIfam" id="NF007111">
    <property type="entry name" value="PRK09560.1"/>
    <property type="match status" value="1"/>
</dbReference>
<dbReference type="NCBIfam" id="NF007112">
    <property type="entry name" value="PRK09561.1"/>
    <property type="match status" value="1"/>
</dbReference>
<dbReference type="PANTHER" id="PTHR30341:SF0">
    <property type="entry name" value="NA(+)_H(+) ANTIPORTER NHAA"/>
    <property type="match status" value="1"/>
</dbReference>
<dbReference type="PANTHER" id="PTHR30341">
    <property type="entry name" value="SODIUM ION/PROTON ANTIPORTER NHAA-RELATED"/>
    <property type="match status" value="1"/>
</dbReference>
<dbReference type="Pfam" id="PF06965">
    <property type="entry name" value="Na_H_antiport_1"/>
    <property type="match status" value="1"/>
</dbReference>
<keyword id="KW-0050">Antiport</keyword>
<keyword id="KW-0997">Cell inner membrane</keyword>
<keyword id="KW-1003">Cell membrane</keyword>
<keyword id="KW-0406">Ion transport</keyword>
<keyword id="KW-0472">Membrane</keyword>
<keyword id="KW-0915">Sodium</keyword>
<keyword id="KW-0739">Sodium transport</keyword>
<keyword id="KW-0812">Transmembrane</keyword>
<keyword id="KW-1133">Transmembrane helix</keyword>
<keyword id="KW-0813">Transport</keyword>
<feature type="chain" id="PRO_0000334257" description="Na(+)/H(+) antiporter NhaA 1">
    <location>
        <begin position="1"/>
        <end position="389"/>
    </location>
</feature>
<feature type="transmembrane region" description="Helical" evidence="1">
    <location>
        <begin position="12"/>
        <end position="32"/>
    </location>
</feature>
<feature type="transmembrane region" description="Helical" evidence="1">
    <location>
        <begin position="62"/>
        <end position="82"/>
    </location>
</feature>
<feature type="transmembrane region" description="Helical" evidence="1">
    <location>
        <begin position="97"/>
        <end position="117"/>
    </location>
</feature>
<feature type="transmembrane region" description="Helical" evidence="1">
    <location>
        <begin position="128"/>
        <end position="148"/>
    </location>
</feature>
<feature type="transmembrane region" description="Helical" evidence="1">
    <location>
        <begin position="157"/>
        <end position="177"/>
    </location>
</feature>
<feature type="transmembrane region" description="Helical" evidence="1">
    <location>
        <begin position="184"/>
        <end position="204"/>
    </location>
</feature>
<feature type="transmembrane region" description="Helical" evidence="1">
    <location>
        <begin position="220"/>
        <end position="240"/>
    </location>
</feature>
<feature type="transmembrane region" description="Helical" evidence="1">
    <location>
        <begin position="260"/>
        <end position="280"/>
    </location>
</feature>
<feature type="transmembrane region" description="Helical" evidence="1">
    <location>
        <begin position="282"/>
        <end position="302"/>
    </location>
</feature>
<feature type="transmembrane region" description="Helical" evidence="1">
    <location>
        <begin position="331"/>
        <end position="351"/>
    </location>
</feature>
<feature type="transmembrane region" description="Helical" evidence="1">
    <location>
        <begin position="365"/>
        <end position="385"/>
    </location>
</feature>
<sequence>MNNIVHKLKTLVLNEAFGGVLLIVCTLLALLVQNGSFSEHYREFLNLKVGFSVGEFELNKPFLLWINDGLISIFFFAIGLELKKEFLHGDFKNPKNIVLPFMAALGGILIPAMLFALVNIGDAYTLKGWAIPTATDTAFALAILMMCGKHIPSSLKIFLLSLAIFDDVGAILIIAIFYTTKLSIVAFVVAGLAILAMLILNLLGITRKSFYFICSVILWISVLKSGVHATLAGIVTAFFIPMQTKNGEAFLEEIYESLKFWIAFIILPLFAFANAGVNLSNIDIGAIFSGVSIGIFLGLFVGKQVGVFLFSYLAIRFKFAALPQGSNLKQLYGVCILTGIGFTMSLFIDGLAYEVSDIFNYADNLAILIASFCSGIWGFIYLKFFTTRS</sequence>
<reference key="1">
    <citation type="journal article" date="2005" name="PLoS Biol.">
        <title>Major structural differences and novel potential virulence mechanisms from the genomes of multiple Campylobacter species.</title>
        <authorList>
            <person name="Fouts D.E."/>
            <person name="Mongodin E.F."/>
            <person name="Mandrell R.E."/>
            <person name="Miller W.G."/>
            <person name="Rasko D.A."/>
            <person name="Ravel J."/>
            <person name="Brinkac L.M."/>
            <person name="DeBoy R.T."/>
            <person name="Parker C.T."/>
            <person name="Daugherty S.C."/>
            <person name="Dodson R.J."/>
            <person name="Durkin A.S."/>
            <person name="Madupu R."/>
            <person name="Sullivan S.A."/>
            <person name="Shetty J.U."/>
            <person name="Ayodeji M.A."/>
            <person name="Shvartsbeyn A."/>
            <person name="Schatz M.C."/>
            <person name="Badger J.H."/>
            <person name="Fraser C.M."/>
            <person name="Nelson K.E."/>
        </authorList>
    </citation>
    <scope>NUCLEOTIDE SEQUENCE [LARGE SCALE GENOMIC DNA]</scope>
    <source>
        <strain>RM1221</strain>
    </source>
</reference>
<organism>
    <name type="scientific">Campylobacter jejuni (strain RM1221)</name>
    <dbReference type="NCBI Taxonomy" id="195099"/>
    <lineage>
        <taxon>Bacteria</taxon>
        <taxon>Pseudomonadati</taxon>
        <taxon>Campylobacterota</taxon>
        <taxon>Epsilonproteobacteria</taxon>
        <taxon>Campylobacterales</taxon>
        <taxon>Campylobacteraceae</taxon>
        <taxon>Campylobacter</taxon>
    </lineage>
</organism>
<gene>
    <name evidence="1" type="primary">nhaA1</name>
    <name type="ordered locus">CJE1826</name>
</gene>
<proteinExistence type="inferred from homology"/>
<name>NHAA1_CAMJR</name>